<organism>
    <name type="scientific">Xenopus laevis</name>
    <name type="common">African clawed frog</name>
    <dbReference type="NCBI Taxonomy" id="8355"/>
    <lineage>
        <taxon>Eukaryota</taxon>
        <taxon>Metazoa</taxon>
        <taxon>Chordata</taxon>
        <taxon>Craniata</taxon>
        <taxon>Vertebrata</taxon>
        <taxon>Euteleostomi</taxon>
        <taxon>Amphibia</taxon>
        <taxon>Batrachia</taxon>
        <taxon>Anura</taxon>
        <taxon>Pipoidea</taxon>
        <taxon>Pipidae</taxon>
        <taxon>Xenopodinae</taxon>
        <taxon>Xenopus</taxon>
        <taxon>Xenopus</taxon>
    </lineage>
</organism>
<keyword id="KW-0027">Amidation</keyword>
<keyword id="KW-0165">Cleavage on pair of basic residues</keyword>
<keyword id="KW-0372">Hormone</keyword>
<keyword id="KW-0873">Pyrrolidone carboxylic acid</keyword>
<keyword id="KW-1185">Reference proteome</keyword>
<keyword id="KW-0677">Repeat</keyword>
<keyword id="KW-0964">Secreted</keyword>
<keyword id="KW-0732">Signal</keyword>
<evidence type="ECO:0000250" key="1"/>
<evidence type="ECO:0000256" key="2">
    <source>
        <dbReference type="SAM" id="MobiDB-lite"/>
    </source>
</evidence>
<evidence type="ECO:0000305" key="3"/>
<name>TRHB_XENLA</name>
<gene>
    <name type="primary">trh-b</name>
</gene>
<sequence>MMFLWWLLLLGTAISHKVHSQEQPLLEEDTAPADNLDVLEKAKGILIRSFLEGFQEGQQINRDLPDAMEMIYKRQHPGKRFQEEIEKRQHPGKRDLEDLQLSKRQHPGRRYLEDMEKRQHPGKREEGDWSRGYLTDDSGYLDLFSDVSKRQHPGKRVPDPFFIKRQHPGKRGIEEEDDTEFENSKEVGKRQHPGKRYDPCEGPNAYNCNSGNLQLDSVEEGWAA</sequence>
<proteinExistence type="evidence at transcript level"/>
<reference key="1">
    <citation type="journal article" date="1992" name="FEBS Lett.">
        <title>A cDNA from brain of Xenopus laevis coding for a new precursor of thyrotropin-releasing hormone.</title>
        <authorList>
            <person name="Bulant M."/>
            <person name="Richter K."/>
            <person name="Kuchler K."/>
            <person name="Kreil G."/>
        </authorList>
    </citation>
    <scope>NUCLEOTIDE SEQUENCE [MRNA]</scope>
    <source>
        <tissue>Brain</tissue>
    </source>
</reference>
<dbReference type="EMBL" id="X64056">
    <property type="protein sequence ID" value="CAA45412.1"/>
    <property type="molecule type" value="mRNA"/>
</dbReference>
<dbReference type="PIR" id="S20382">
    <property type="entry name" value="S20382"/>
</dbReference>
<dbReference type="RefSeq" id="NP_001095208.1">
    <property type="nucleotide sequence ID" value="NM_001101738.1"/>
</dbReference>
<dbReference type="BindingDB" id="Q00643"/>
<dbReference type="GeneID" id="373666"/>
<dbReference type="KEGG" id="xla:373666"/>
<dbReference type="AGR" id="Xenbase:XB-GENE-6252873"/>
<dbReference type="CTD" id="373666"/>
<dbReference type="Xenbase" id="XB-GENE-6252873">
    <property type="gene designation" value="trh.S"/>
</dbReference>
<dbReference type="OrthoDB" id="9949225at2759"/>
<dbReference type="Proteomes" id="UP000186698">
    <property type="component" value="Chromosome 4S"/>
</dbReference>
<dbReference type="Bgee" id="373666">
    <property type="expression patterns" value="Expressed in brain and 3 other cell types or tissues"/>
</dbReference>
<dbReference type="GO" id="GO:0005576">
    <property type="term" value="C:extracellular region"/>
    <property type="evidence" value="ECO:0007669"/>
    <property type="project" value="UniProtKB-SubCell"/>
</dbReference>
<dbReference type="GO" id="GO:0030141">
    <property type="term" value="C:secretory granule"/>
    <property type="evidence" value="ECO:0000318"/>
    <property type="project" value="GO_Central"/>
</dbReference>
<dbReference type="GO" id="GO:0008437">
    <property type="term" value="F:thyrotropin-releasing hormone activity"/>
    <property type="evidence" value="ECO:0000318"/>
    <property type="project" value="GO_Central"/>
</dbReference>
<dbReference type="GO" id="GO:0042755">
    <property type="term" value="P:eating behavior"/>
    <property type="evidence" value="ECO:0000318"/>
    <property type="project" value="GO_Central"/>
</dbReference>
<dbReference type="GO" id="GO:0001692">
    <property type="term" value="P:histamine metabolic process"/>
    <property type="evidence" value="ECO:0000318"/>
    <property type="project" value="GO_Central"/>
</dbReference>
<dbReference type="GO" id="GO:0009755">
    <property type="term" value="P:hormone-mediated signaling pathway"/>
    <property type="evidence" value="ECO:0007669"/>
    <property type="project" value="InterPro"/>
</dbReference>
<dbReference type="GO" id="GO:0014050">
    <property type="term" value="P:negative regulation of glutamate secretion"/>
    <property type="evidence" value="ECO:0000318"/>
    <property type="project" value="GO_Central"/>
</dbReference>
<dbReference type="GO" id="GO:0014054">
    <property type="term" value="P:positive regulation of gamma-aminobutyric acid secretion"/>
    <property type="evidence" value="ECO:0000318"/>
    <property type="project" value="GO_Central"/>
</dbReference>
<dbReference type="GO" id="GO:0032024">
    <property type="term" value="P:positive regulation of insulin secretion"/>
    <property type="evidence" value="ECO:0000318"/>
    <property type="project" value="GO_Central"/>
</dbReference>
<dbReference type="InterPro" id="IPR008857">
    <property type="entry name" value="TRH"/>
</dbReference>
<dbReference type="PANTHER" id="PTHR17530">
    <property type="entry name" value="PRO-THYROTROPIN-RELEASING HORMONE"/>
    <property type="match status" value="1"/>
</dbReference>
<dbReference type="PANTHER" id="PTHR17530:SF2">
    <property type="entry name" value="PRO-THYROTROPIN-RELEASING HORMONE"/>
    <property type="match status" value="1"/>
</dbReference>
<dbReference type="Pfam" id="PF05438">
    <property type="entry name" value="TRH"/>
    <property type="match status" value="3"/>
</dbReference>
<dbReference type="PIRSF" id="PIRSF001795">
    <property type="entry name" value="TRH"/>
    <property type="match status" value="1"/>
</dbReference>
<accession>Q00643</accession>
<comment type="subcellular location">
    <subcellularLocation>
        <location>Secreted</location>
    </subcellularLocation>
</comment>
<comment type="miscellaneous">
    <text>This precursor contains seven copies of thyroliberin.</text>
</comment>
<comment type="similarity">
    <text evidence="3">Belongs to the TRH family.</text>
</comment>
<protein>
    <recommendedName>
        <fullName>Pro-thyrotropin-releasing hormone-B</fullName>
        <shortName>Pro-TRH-B</shortName>
    </recommendedName>
    <alternativeName>
        <fullName>Prothyroliberin type B</fullName>
    </alternativeName>
    <component>
        <recommendedName>
            <fullName>Thyrotropin-releasing hormone</fullName>
            <shortName>TRH</shortName>
        </recommendedName>
        <alternativeName>
            <fullName>Protirelin</fullName>
        </alternativeName>
        <alternativeName>
            <fullName>TSH-releasing factor</fullName>
        </alternativeName>
        <alternativeName>
            <fullName>Thyroliberin</fullName>
        </alternativeName>
        <alternativeName>
            <fullName>Thyrotropin-releasing factor</fullName>
            <shortName>TRF</shortName>
        </alternativeName>
    </component>
</protein>
<feature type="signal peptide" evidence="1">
    <location>
        <begin position="1"/>
        <end position="15"/>
    </location>
</feature>
<feature type="chain" id="PRO_0000022501" description="Pro-thyrotropin-releasing hormone-B">
    <location>
        <begin position="16"/>
        <end position="224"/>
    </location>
</feature>
<feature type="peptide" id="PRO_0000022502" description="Thyrotropin-releasing hormone">
    <location>
        <begin position="75"/>
        <end position="77"/>
    </location>
</feature>
<feature type="peptide" id="PRO_0000022503" description="Thyrotropin-releasing hormone">
    <location>
        <begin position="89"/>
        <end position="91"/>
    </location>
</feature>
<feature type="peptide" id="PRO_0000022504" description="Thyrotropin-releasing hormone">
    <location>
        <begin position="105"/>
        <end position="107"/>
    </location>
</feature>
<feature type="peptide" id="PRO_0000022505" description="Thyrotropin-releasing hormone">
    <location>
        <begin position="119"/>
        <end position="121"/>
    </location>
</feature>
<feature type="peptide" id="PRO_0000022506" description="Thyrotropin-releasing hormone">
    <location>
        <begin position="151"/>
        <end position="153"/>
    </location>
</feature>
<feature type="peptide" id="PRO_0000022507" description="Thyrotropin-releasing hormone">
    <location>
        <begin position="166"/>
        <end position="168"/>
    </location>
</feature>
<feature type="peptide" id="PRO_0000022508" description="Thyrotropin-releasing hormone">
    <location>
        <begin position="191"/>
        <end position="193"/>
    </location>
</feature>
<feature type="region of interest" description="Disordered" evidence="2">
    <location>
        <begin position="86"/>
        <end position="131"/>
    </location>
</feature>
<feature type="region of interest" description="Disordered" evidence="2">
    <location>
        <begin position="150"/>
        <end position="212"/>
    </location>
</feature>
<feature type="compositionally biased region" description="Basic and acidic residues" evidence="2">
    <location>
        <begin position="86"/>
        <end position="101"/>
    </location>
</feature>
<feature type="compositionally biased region" description="Basic and acidic residues" evidence="2">
    <location>
        <begin position="110"/>
        <end position="129"/>
    </location>
</feature>
<feature type="compositionally biased region" description="Basic and acidic residues" evidence="2">
    <location>
        <begin position="182"/>
        <end position="199"/>
    </location>
</feature>
<feature type="modified residue" description="Pyrrolidone carboxylic acid" evidence="1">
    <location>
        <position position="75"/>
    </location>
</feature>
<feature type="modified residue" description="Proline amide" evidence="1">
    <location>
        <position position="77"/>
    </location>
</feature>
<feature type="modified residue" description="Pyrrolidone carboxylic acid" evidence="1">
    <location>
        <position position="89"/>
    </location>
</feature>
<feature type="modified residue" description="Proline amide" evidence="1">
    <location>
        <position position="91"/>
    </location>
</feature>
<feature type="modified residue" description="Pyrrolidone carboxylic acid" evidence="1">
    <location>
        <position position="105"/>
    </location>
</feature>
<feature type="modified residue" description="Proline amide" evidence="1">
    <location>
        <position position="107"/>
    </location>
</feature>
<feature type="modified residue" description="Pyrrolidone carboxylic acid" evidence="1">
    <location>
        <position position="119"/>
    </location>
</feature>
<feature type="modified residue" description="Proline amide" evidence="1">
    <location>
        <position position="121"/>
    </location>
</feature>
<feature type="modified residue" description="Pyrrolidone carboxylic acid" evidence="1">
    <location>
        <position position="151"/>
    </location>
</feature>
<feature type="modified residue" description="Proline amide" evidence="1">
    <location>
        <position position="153"/>
    </location>
</feature>
<feature type="modified residue" description="Pyrrolidone carboxylic acid" evidence="1">
    <location>
        <position position="166"/>
    </location>
</feature>
<feature type="modified residue" description="Proline amide" evidence="1">
    <location>
        <position position="168"/>
    </location>
</feature>
<feature type="modified residue" description="Pyrrolidone carboxylic acid" evidence="1">
    <location>
        <position position="191"/>
    </location>
</feature>
<feature type="modified residue" description="Proline amide" evidence="1">
    <location>
        <position position="193"/>
    </location>
</feature>